<reference key="1">
    <citation type="journal article" date="2006" name="Genome Biol.">
        <title>The genome of Rhizobium leguminosarum has recognizable core and accessory components.</title>
        <authorList>
            <person name="Young J.P.W."/>
            <person name="Crossman L.C."/>
            <person name="Johnston A.W.B."/>
            <person name="Thomson N.R."/>
            <person name="Ghazoui Z.F."/>
            <person name="Hull K.H."/>
            <person name="Wexler M."/>
            <person name="Curson A.R.J."/>
            <person name="Todd J.D."/>
            <person name="Poole P.S."/>
            <person name="Mauchline T.H."/>
            <person name="East A.K."/>
            <person name="Quail M.A."/>
            <person name="Churcher C."/>
            <person name="Arrowsmith C."/>
            <person name="Cherevach I."/>
            <person name="Chillingworth T."/>
            <person name="Clarke K."/>
            <person name="Cronin A."/>
            <person name="Davis P."/>
            <person name="Fraser A."/>
            <person name="Hance Z."/>
            <person name="Hauser H."/>
            <person name="Jagels K."/>
            <person name="Moule S."/>
            <person name="Mungall K."/>
            <person name="Norbertczak H."/>
            <person name="Rabbinowitsch E."/>
            <person name="Sanders M."/>
            <person name="Simmonds M."/>
            <person name="Whitehead S."/>
            <person name="Parkhill J."/>
        </authorList>
    </citation>
    <scope>NUCLEOTIDE SEQUENCE [LARGE SCALE GENOMIC DNA]</scope>
    <source>
        <strain>DSM 114642 / LMG 32736 / 3841</strain>
    </source>
</reference>
<name>ACPS_RHIJ3</name>
<organism>
    <name type="scientific">Rhizobium johnstonii (strain DSM 114642 / LMG 32736 / 3841)</name>
    <name type="common">Rhizobium leguminosarum bv. viciae</name>
    <dbReference type="NCBI Taxonomy" id="216596"/>
    <lineage>
        <taxon>Bacteria</taxon>
        <taxon>Pseudomonadati</taxon>
        <taxon>Pseudomonadota</taxon>
        <taxon>Alphaproteobacteria</taxon>
        <taxon>Hyphomicrobiales</taxon>
        <taxon>Rhizobiaceae</taxon>
        <taxon>Rhizobium/Agrobacterium group</taxon>
        <taxon>Rhizobium</taxon>
        <taxon>Rhizobium johnstonii</taxon>
    </lineage>
</organism>
<sequence length="134" mass="14683">MIIGIGSDLIDIRRVEKSIERFGERFTHRCFTEIERARSDKRANRAASYAKRFAAKEACSKALGTGIAQGVFWKDMGVVNLRSGKPTMLLSGGAALILESLLPAGHRPAIHLTITDDYPLAQAFVIIEALPESL</sequence>
<accession>Q1MJ56</accession>
<protein>
    <recommendedName>
        <fullName evidence="1">Holo-[acyl-carrier-protein] synthase</fullName>
        <shortName evidence="1">Holo-ACP synthase</shortName>
        <ecNumber evidence="1">2.7.8.7</ecNumber>
    </recommendedName>
    <alternativeName>
        <fullName evidence="1">4'-phosphopantetheinyl transferase AcpS</fullName>
    </alternativeName>
</protein>
<comment type="function">
    <text evidence="1">Transfers the 4'-phosphopantetheine moiety from coenzyme A to a Ser of acyl-carrier-protein.</text>
</comment>
<comment type="catalytic activity">
    <reaction evidence="1">
        <text>apo-[ACP] + CoA = holo-[ACP] + adenosine 3',5'-bisphosphate + H(+)</text>
        <dbReference type="Rhea" id="RHEA:12068"/>
        <dbReference type="Rhea" id="RHEA-COMP:9685"/>
        <dbReference type="Rhea" id="RHEA-COMP:9690"/>
        <dbReference type="ChEBI" id="CHEBI:15378"/>
        <dbReference type="ChEBI" id="CHEBI:29999"/>
        <dbReference type="ChEBI" id="CHEBI:57287"/>
        <dbReference type="ChEBI" id="CHEBI:58343"/>
        <dbReference type="ChEBI" id="CHEBI:64479"/>
        <dbReference type="EC" id="2.7.8.7"/>
    </reaction>
</comment>
<comment type="cofactor">
    <cofactor evidence="1">
        <name>Mg(2+)</name>
        <dbReference type="ChEBI" id="CHEBI:18420"/>
    </cofactor>
</comment>
<comment type="subcellular location">
    <subcellularLocation>
        <location evidence="1">Cytoplasm</location>
    </subcellularLocation>
</comment>
<comment type="similarity">
    <text evidence="1">Belongs to the P-Pant transferase superfamily. AcpS family.</text>
</comment>
<gene>
    <name evidence="1" type="primary">acpS</name>
    <name type="ordered locus">RL1509</name>
</gene>
<feature type="chain" id="PRO_1000008476" description="Holo-[acyl-carrier-protein] synthase">
    <location>
        <begin position="1"/>
        <end position="134"/>
    </location>
</feature>
<feature type="binding site" evidence="1">
    <location>
        <position position="8"/>
    </location>
    <ligand>
        <name>Mg(2+)</name>
        <dbReference type="ChEBI" id="CHEBI:18420"/>
    </ligand>
</feature>
<feature type="binding site" evidence="1">
    <location>
        <position position="57"/>
    </location>
    <ligand>
        <name>Mg(2+)</name>
        <dbReference type="ChEBI" id="CHEBI:18420"/>
    </ligand>
</feature>
<proteinExistence type="inferred from homology"/>
<dbReference type="EC" id="2.7.8.7" evidence="1"/>
<dbReference type="EMBL" id="AM236080">
    <property type="protein sequence ID" value="CAK07004.1"/>
    <property type="molecule type" value="Genomic_DNA"/>
</dbReference>
<dbReference type="RefSeq" id="WP_011651200.1">
    <property type="nucleotide sequence ID" value="NC_008380.1"/>
</dbReference>
<dbReference type="SMR" id="Q1MJ56"/>
<dbReference type="EnsemblBacteria" id="CAK07004">
    <property type="protein sequence ID" value="CAK07004"/>
    <property type="gene ID" value="RL1509"/>
</dbReference>
<dbReference type="KEGG" id="rle:RL1509"/>
<dbReference type="eggNOG" id="COG0736">
    <property type="taxonomic scope" value="Bacteria"/>
</dbReference>
<dbReference type="HOGENOM" id="CLU_089696_0_2_5"/>
<dbReference type="Proteomes" id="UP000006575">
    <property type="component" value="Chromosome"/>
</dbReference>
<dbReference type="GO" id="GO:0005737">
    <property type="term" value="C:cytoplasm"/>
    <property type="evidence" value="ECO:0007669"/>
    <property type="project" value="UniProtKB-SubCell"/>
</dbReference>
<dbReference type="GO" id="GO:0008897">
    <property type="term" value="F:holo-[acyl-carrier-protein] synthase activity"/>
    <property type="evidence" value="ECO:0007669"/>
    <property type="project" value="UniProtKB-UniRule"/>
</dbReference>
<dbReference type="GO" id="GO:0000287">
    <property type="term" value="F:magnesium ion binding"/>
    <property type="evidence" value="ECO:0007669"/>
    <property type="project" value="UniProtKB-UniRule"/>
</dbReference>
<dbReference type="GO" id="GO:0006633">
    <property type="term" value="P:fatty acid biosynthetic process"/>
    <property type="evidence" value="ECO:0007669"/>
    <property type="project" value="UniProtKB-UniRule"/>
</dbReference>
<dbReference type="Gene3D" id="3.90.470.20">
    <property type="entry name" value="4'-phosphopantetheinyl transferase domain"/>
    <property type="match status" value="1"/>
</dbReference>
<dbReference type="HAMAP" id="MF_00101">
    <property type="entry name" value="AcpS"/>
    <property type="match status" value="1"/>
</dbReference>
<dbReference type="InterPro" id="IPR008278">
    <property type="entry name" value="4-PPantetheinyl_Trfase_dom"/>
</dbReference>
<dbReference type="InterPro" id="IPR037143">
    <property type="entry name" value="4-PPantetheinyl_Trfase_dom_sf"/>
</dbReference>
<dbReference type="InterPro" id="IPR002582">
    <property type="entry name" value="ACPS"/>
</dbReference>
<dbReference type="InterPro" id="IPR004568">
    <property type="entry name" value="Ppantetheine-prot_Trfase_dom"/>
</dbReference>
<dbReference type="NCBIfam" id="TIGR00516">
    <property type="entry name" value="acpS"/>
    <property type="match status" value="1"/>
</dbReference>
<dbReference type="NCBIfam" id="TIGR00556">
    <property type="entry name" value="pantethn_trn"/>
    <property type="match status" value="1"/>
</dbReference>
<dbReference type="Pfam" id="PF01648">
    <property type="entry name" value="ACPS"/>
    <property type="match status" value="1"/>
</dbReference>
<dbReference type="SUPFAM" id="SSF56214">
    <property type="entry name" value="4'-phosphopantetheinyl transferase"/>
    <property type="match status" value="1"/>
</dbReference>
<evidence type="ECO:0000255" key="1">
    <source>
        <dbReference type="HAMAP-Rule" id="MF_00101"/>
    </source>
</evidence>
<keyword id="KW-0963">Cytoplasm</keyword>
<keyword id="KW-0275">Fatty acid biosynthesis</keyword>
<keyword id="KW-0276">Fatty acid metabolism</keyword>
<keyword id="KW-0444">Lipid biosynthesis</keyword>
<keyword id="KW-0443">Lipid metabolism</keyword>
<keyword id="KW-0460">Magnesium</keyword>
<keyword id="KW-0479">Metal-binding</keyword>
<keyword id="KW-0808">Transferase</keyword>